<comment type="subunit">
    <text evidence="1">Forms oligomers.</text>
</comment>
<comment type="subcellular location">
    <subcellularLocation>
        <location evidence="1">Cytoplasm</location>
        <location evidence="1">Nucleoid</location>
    </subcellularLocation>
</comment>
<comment type="similarity">
    <text evidence="1">Belongs to the MraZ family.</text>
</comment>
<organism>
    <name type="scientific">Moorella thermoacetica (strain ATCC 39073 / JCM 9320)</name>
    <dbReference type="NCBI Taxonomy" id="264732"/>
    <lineage>
        <taxon>Bacteria</taxon>
        <taxon>Bacillati</taxon>
        <taxon>Bacillota</taxon>
        <taxon>Clostridia</taxon>
        <taxon>Moorellales</taxon>
        <taxon>Moorellaceae</taxon>
        <taxon>Moorella</taxon>
    </lineage>
</organism>
<evidence type="ECO:0000255" key="1">
    <source>
        <dbReference type="HAMAP-Rule" id="MF_01008"/>
    </source>
</evidence>
<evidence type="ECO:0000255" key="2">
    <source>
        <dbReference type="PROSITE-ProRule" id="PRU01076"/>
    </source>
</evidence>
<protein>
    <recommendedName>
        <fullName>Transcriptional regulator MraZ</fullName>
    </recommendedName>
</protein>
<keyword id="KW-0963">Cytoplasm</keyword>
<keyword id="KW-0238">DNA-binding</keyword>
<keyword id="KW-0677">Repeat</keyword>
<keyword id="KW-0804">Transcription</keyword>
<keyword id="KW-0805">Transcription regulation</keyword>
<gene>
    <name evidence="1" type="primary">mraZ</name>
    <name type="ordered locus">Moth_0834</name>
</gene>
<name>MRAZ_MOOTA</name>
<accession>Q2RK88</accession>
<proteinExistence type="inferred from homology"/>
<dbReference type="EMBL" id="CP000232">
    <property type="protein sequence ID" value="ABC19151.1"/>
    <property type="molecule type" value="Genomic_DNA"/>
</dbReference>
<dbReference type="RefSeq" id="YP_429694.1">
    <property type="nucleotide sequence ID" value="NC_007644.1"/>
</dbReference>
<dbReference type="SMR" id="Q2RK88"/>
<dbReference type="STRING" id="264732.Moth_0834"/>
<dbReference type="EnsemblBacteria" id="ABC19151">
    <property type="protein sequence ID" value="ABC19151"/>
    <property type="gene ID" value="Moth_0834"/>
</dbReference>
<dbReference type="KEGG" id="mta:Moth_0834"/>
<dbReference type="PATRIC" id="fig|264732.11.peg.896"/>
<dbReference type="eggNOG" id="COG2001">
    <property type="taxonomic scope" value="Bacteria"/>
</dbReference>
<dbReference type="HOGENOM" id="CLU_107907_0_5_9"/>
<dbReference type="OrthoDB" id="9807753at2"/>
<dbReference type="GO" id="GO:0005737">
    <property type="term" value="C:cytoplasm"/>
    <property type="evidence" value="ECO:0007669"/>
    <property type="project" value="UniProtKB-UniRule"/>
</dbReference>
<dbReference type="GO" id="GO:0009295">
    <property type="term" value="C:nucleoid"/>
    <property type="evidence" value="ECO:0007669"/>
    <property type="project" value="UniProtKB-SubCell"/>
</dbReference>
<dbReference type="GO" id="GO:0003700">
    <property type="term" value="F:DNA-binding transcription factor activity"/>
    <property type="evidence" value="ECO:0007669"/>
    <property type="project" value="UniProtKB-UniRule"/>
</dbReference>
<dbReference type="GO" id="GO:0000976">
    <property type="term" value="F:transcription cis-regulatory region binding"/>
    <property type="evidence" value="ECO:0007669"/>
    <property type="project" value="TreeGrafter"/>
</dbReference>
<dbReference type="GO" id="GO:2000143">
    <property type="term" value="P:negative regulation of DNA-templated transcription initiation"/>
    <property type="evidence" value="ECO:0007669"/>
    <property type="project" value="TreeGrafter"/>
</dbReference>
<dbReference type="CDD" id="cd16321">
    <property type="entry name" value="MraZ_C"/>
    <property type="match status" value="1"/>
</dbReference>
<dbReference type="CDD" id="cd16320">
    <property type="entry name" value="MraZ_N"/>
    <property type="match status" value="1"/>
</dbReference>
<dbReference type="FunFam" id="3.40.1550.20:FF:000002">
    <property type="entry name" value="Transcriptional regulator MraZ"/>
    <property type="match status" value="1"/>
</dbReference>
<dbReference type="Gene3D" id="3.40.1550.20">
    <property type="entry name" value="Transcriptional regulator MraZ domain"/>
    <property type="match status" value="1"/>
</dbReference>
<dbReference type="HAMAP" id="MF_01008">
    <property type="entry name" value="MraZ"/>
    <property type="match status" value="1"/>
</dbReference>
<dbReference type="InterPro" id="IPR003444">
    <property type="entry name" value="MraZ"/>
</dbReference>
<dbReference type="InterPro" id="IPR035644">
    <property type="entry name" value="MraZ_C"/>
</dbReference>
<dbReference type="InterPro" id="IPR020603">
    <property type="entry name" value="MraZ_dom"/>
</dbReference>
<dbReference type="InterPro" id="IPR035642">
    <property type="entry name" value="MraZ_N"/>
</dbReference>
<dbReference type="InterPro" id="IPR038619">
    <property type="entry name" value="MraZ_sf"/>
</dbReference>
<dbReference type="InterPro" id="IPR007159">
    <property type="entry name" value="SpoVT-AbrB_dom"/>
</dbReference>
<dbReference type="InterPro" id="IPR037914">
    <property type="entry name" value="SpoVT-AbrB_sf"/>
</dbReference>
<dbReference type="NCBIfam" id="TIGR00242">
    <property type="entry name" value="division/cell wall cluster transcriptional repressor MraZ"/>
    <property type="match status" value="1"/>
</dbReference>
<dbReference type="PANTHER" id="PTHR34701">
    <property type="entry name" value="TRANSCRIPTIONAL REGULATOR MRAZ"/>
    <property type="match status" value="1"/>
</dbReference>
<dbReference type="PANTHER" id="PTHR34701:SF1">
    <property type="entry name" value="TRANSCRIPTIONAL REGULATOR MRAZ"/>
    <property type="match status" value="1"/>
</dbReference>
<dbReference type="Pfam" id="PF02381">
    <property type="entry name" value="MraZ"/>
    <property type="match status" value="2"/>
</dbReference>
<dbReference type="SUPFAM" id="SSF89447">
    <property type="entry name" value="AbrB/MazE/MraZ-like"/>
    <property type="match status" value="1"/>
</dbReference>
<dbReference type="PROSITE" id="PS51740">
    <property type="entry name" value="SPOVT_ABRB"/>
    <property type="match status" value="2"/>
</dbReference>
<reference key="1">
    <citation type="journal article" date="2008" name="Environ. Microbiol.">
        <title>The complete genome sequence of Moorella thermoacetica (f. Clostridium thermoaceticum).</title>
        <authorList>
            <person name="Pierce E."/>
            <person name="Xie G."/>
            <person name="Barabote R.D."/>
            <person name="Saunders E."/>
            <person name="Han C.S."/>
            <person name="Detter J.C."/>
            <person name="Richardson P."/>
            <person name="Brettin T.S."/>
            <person name="Das A."/>
            <person name="Ljungdahl L.G."/>
            <person name="Ragsdale S.W."/>
        </authorList>
    </citation>
    <scope>NUCLEOTIDE SEQUENCE [LARGE SCALE GENOMIC DNA]</scope>
    <source>
        <strain>ATCC 39073 / JCM 9320</strain>
    </source>
</reference>
<sequence length="143" mass="16840">MFMGEYHHTIDDKGRLIIPARFREELGVKFVITKGLDNCLFVYPMQGWAEMEQKLRSLPFTRADARAFVRFFFSGATECELDRQGRILLPGNLREYARLDKEVVVVGVSTRVEIWSRSRWEEYCRETSDQYEALAEKMVDFDI</sequence>
<feature type="chain" id="PRO_0000230089" description="Transcriptional regulator MraZ">
    <location>
        <begin position="1"/>
        <end position="143"/>
    </location>
</feature>
<feature type="domain" description="SpoVT-AbrB 1" evidence="2">
    <location>
        <begin position="5"/>
        <end position="47"/>
    </location>
</feature>
<feature type="domain" description="SpoVT-AbrB 2" evidence="2">
    <location>
        <begin position="76"/>
        <end position="119"/>
    </location>
</feature>